<gene>
    <name evidence="14" type="primary">ADC1</name>
    <name evidence="16" type="synonym">SPE1</name>
    <name evidence="18" type="ordered locus">At2g16500</name>
    <name evidence="19" type="ORF">F1P15.12</name>
</gene>
<organism>
    <name type="scientific">Arabidopsis thaliana</name>
    <name type="common">Mouse-ear cress</name>
    <dbReference type="NCBI Taxonomy" id="3702"/>
    <lineage>
        <taxon>Eukaryota</taxon>
        <taxon>Viridiplantae</taxon>
        <taxon>Streptophyta</taxon>
        <taxon>Embryophyta</taxon>
        <taxon>Tracheophyta</taxon>
        <taxon>Spermatophyta</taxon>
        <taxon>Magnoliopsida</taxon>
        <taxon>eudicotyledons</taxon>
        <taxon>Gunneridae</taxon>
        <taxon>Pentapetalae</taxon>
        <taxon>rosids</taxon>
        <taxon>malvids</taxon>
        <taxon>Brassicales</taxon>
        <taxon>Brassicaceae</taxon>
        <taxon>Camelineae</taxon>
        <taxon>Arabidopsis</taxon>
    </lineage>
</organism>
<name>SPE1_ARATH</name>
<protein>
    <recommendedName>
        <fullName evidence="17">Arginine decarboxylase 1, chloroplastic</fullName>
        <shortName evidence="17">ADC 1</shortName>
        <shortName evidence="17">ADC-O</shortName>
        <shortName evidence="17">ARGDC 1</shortName>
        <shortName evidence="15">AtADC1</shortName>
        <ecNumber evidence="7">4.1.1.19</ecNumber>
    </recommendedName>
</protein>
<keyword id="KW-0150">Chloroplast</keyword>
<keyword id="KW-0963">Cytoplasm</keyword>
<keyword id="KW-0210">Decarboxylase</keyword>
<keyword id="KW-0456">Lyase</keyword>
<keyword id="KW-0460">Magnesium</keyword>
<keyword id="KW-0934">Plastid</keyword>
<keyword id="KW-0661">Putrescine biosynthesis</keyword>
<keyword id="KW-0663">Pyridoxal phosphate</keyword>
<keyword id="KW-1185">Reference proteome</keyword>
<keyword id="KW-0745">Spermidine biosynthesis</keyword>
<keyword id="KW-0346">Stress response</keyword>
<keyword id="KW-0809">Transit peptide</keyword>
<comment type="function">
    <text evidence="7 8 9 10 11">Required for the biosynthesis of putrescine. Catalyzes the first step of polyamine (PA) biosynthesis to produce putrescine from arginine (PubMed:11576438, PubMed:15733873, PubMed:25409942). Is a minor contributor to basal arginine decarboxylase (ADC) activity and putrescine biosynthesis (PubMed:25409942). Accumulation of putrescine plays a positive role in freezing tolerance (PubMed:18701673). Production of polyamines is essential for normal seed development (PubMed:15733873). Controls PA homeostasis which is crucial for normal plant growth and development (PubMed:27014322).</text>
</comment>
<comment type="catalytic activity">
    <reaction evidence="7">
        <text>L-arginine + H(+) = agmatine + CO2</text>
        <dbReference type="Rhea" id="RHEA:17641"/>
        <dbReference type="ChEBI" id="CHEBI:15378"/>
        <dbReference type="ChEBI" id="CHEBI:16526"/>
        <dbReference type="ChEBI" id="CHEBI:32682"/>
        <dbReference type="ChEBI" id="CHEBI:58145"/>
        <dbReference type="EC" id="4.1.1.19"/>
    </reaction>
</comment>
<comment type="cofactor">
    <cofactor evidence="4">
        <name>pyridoxal 5'-phosphate</name>
        <dbReference type="ChEBI" id="CHEBI:597326"/>
    </cofactor>
</comment>
<comment type="cofactor">
    <cofactor evidence="5">
        <name>Mg(2+)</name>
        <dbReference type="ChEBI" id="CHEBI:18420"/>
    </cofactor>
</comment>
<comment type="pathway">
    <text evidence="17">Amine and polyamine biosynthesis; agmatine biosynthesis; agmatine from L-arginine: step 1/1.</text>
</comment>
<comment type="subunit">
    <text evidence="7 12">Homodimer. Only the dimer is catalytically active, as the active sites are constructed of residues from both monomers. May form a head-to-tail homodimer (PubMed:11576438). Homodimer and heterodimer with ADC2 (PubMed:28109885).</text>
</comment>
<comment type="subcellular location">
    <subcellularLocation>
        <location evidence="12">Plastid</location>
        <location evidence="12">Chloroplast</location>
    </subcellularLocation>
    <subcellularLocation>
        <location evidence="12">Cytoplasm</location>
        <location evidence="12">Cytosol</location>
    </subcellularLocation>
    <text evidence="12">Localizes mainly in the chloroplast.</text>
</comment>
<comment type="induction">
    <text evidence="9 10">Induced by freezing (PubMed:18701673). Induced by the bacterial pathogen Pseudomonas viridiflava (PubMed:25409942).</text>
</comment>
<comment type="disruption phenotype">
    <text evidence="13">Increased levels of lateral root branching.</text>
</comment>
<comment type="similarity">
    <text evidence="17">Belongs to the Orn/Lys/Arg decarboxylase class-II family. SpeA subfamily.</text>
</comment>
<feature type="transit peptide" description="Chloroplast" evidence="6">
    <location>
        <begin position="1"/>
        <end position="52"/>
    </location>
</feature>
<feature type="chain" id="PRO_0000149946" description="Arginine decarboxylase 1, chloroplastic">
    <location>
        <begin position="53"/>
        <end position="702"/>
    </location>
</feature>
<feature type="active site" description="Proton donor; shared with dimeric partner" evidence="4">
    <location>
        <position position="524"/>
    </location>
</feature>
<feature type="binding site" evidence="4">
    <location>
        <position position="288"/>
    </location>
    <ligand>
        <name>pyridoxal 5'-phosphate</name>
        <dbReference type="ChEBI" id="CHEBI:597326"/>
    </ligand>
</feature>
<feature type="binding site" description="in other chain" evidence="1">
    <location>
        <begin position="320"/>
        <end position="330"/>
    </location>
    <ligand>
        <name>substrate</name>
        <note>ligand shared between dimeric partners</note>
    </ligand>
</feature>
<feature type="binding site" evidence="4">
    <location>
        <position position="325"/>
    </location>
    <ligand>
        <name>pyridoxal 5'-phosphate</name>
        <dbReference type="ChEBI" id="CHEBI:597326"/>
    </ligand>
</feature>
<feature type="binding site" evidence="4">
    <location>
        <begin position="374"/>
        <end position="377"/>
    </location>
    <ligand>
        <name>pyridoxal 5'-phosphate</name>
        <dbReference type="ChEBI" id="CHEBI:597326"/>
    </ligand>
</feature>
<feature type="binding site" description="in other chain" evidence="3">
    <location>
        <begin position="436"/>
        <end position="437"/>
    </location>
    <ligand>
        <name>substrate</name>
        <note>ligand shared between dimeric partners</note>
    </ligand>
</feature>
<feature type="binding site" evidence="3">
    <location>
        <position position="525"/>
    </location>
    <ligand>
        <name>substrate</name>
        <note>ligand shared between dimeric partners</note>
    </ligand>
</feature>
<feature type="binding site" evidence="4">
    <location>
        <position position="565"/>
    </location>
    <ligand>
        <name>pyridoxal 5'-phosphate</name>
        <dbReference type="ChEBI" id="CHEBI:597326"/>
    </ligand>
</feature>
<feature type="site" description="Stacks against the aromatic ring of pyridoxal phosphate and stabilizes reaction intermediates" evidence="2">
    <location>
        <position position="285"/>
    </location>
</feature>
<feature type="modified residue" description="N6-(pyridoxal phosphate)lysine" evidence="4">
    <location>
        <position position="136"/>
    </location>
</feature>
<feature type="mutagenesis site" description="Loss of decarboxylase activity." evidence="7">
    <original>K</original>
    <variation>A</variation>
    <location>
        <position position="136"/>
    </location>
</feature>
<feature type="mutagenesis site" description="Loss of decarboxylase activity." evidence="7">
    <original>C</original>
    <variation>A</variation>
    <location>
        <position position="524"/>
    </location>
</feature>
<feature type="sequence conflict" description="In Ref. 1; AAB09723." evidence="17" ref="1">
    <original>S</original>
    <variation>F</variation>
    <location>
        <position position="452"/>
    </location>
</feature>
<accession>Q9SI64</accession>
<accession>Q38938</accession>
<reference key="1">
    <citation type="journal article" date="1996" name="Plant Physiol.">
        <title>Regulation of Arabidopsis thaliana (L.) Heynh Arginine decarboxylase by potassium deficiency stress.</title>
        <authorList>
            <person name="Watson M.B."/>
            <person name="Malmberg R.L."/>
        </authorList>
    </citation>
    <scope>NUCLEOTIDE SEQUENCE [MRNA]</scope>
    <source>
        <strain>cv. Columbia</strain>
    </source>
</reference>
<reference key="2">
    <citation type="journal article" date="1999" name="Nature">
        <title>Sequence and analysis of chromosome 2 of the plant Arabidopsis thaliana.</title>
        <authorList>
            <person name="Lin X."/>
            <person name="Kaul S."/>
            <person name="Rounsley S.D."/>
            <person name="Shea T.P."/>
            <person name="Benito M.-I."/>
            <person name="Town C.D."/>
            <person name="Fujii C.Y."/>
            <person name="Mason T.M."/>
            <person name="Bowman C.L."/>
            <person name="Barnstead M.E."/>
            <person name="Feldblyum T.V."/>
            <person name="Buell C.R."/>
            <person name="Ketchum K.A."/>
            <person name="Lee J.J."/>
            <person name="Ronning C.M."/>
            <person name="Koo H.L."/>
            <person name="Moffat K.S."/>
            <person name="Cronin L.A."/>
            <person name="Shen M."/>
            <person name="Pai G."/>
            <person name="Van Aken S."/>
            <person name="Umayam L."/>
            <person name="Tallon L.J."/>
            <person name="Gill J.E."/>
            <person name="Adams M.D."/>
            <person name="Carrera A.J."/>
            <person name="Creasy T.H."/>
            <person name="Goodman H.M."/>
            <person name="Somerville C.R."/>
            <person name="Copenhaver G.P."/>
            <person name="Preuss D."/>
            <person name="Nierman W.C."/>
            <person name="White O."/>
            <person name="Eisen J.A."/>
            <person name="Salzberg S.L."/>
            <person name="Fraser C.M."/>
            <person name="Venter J.C."/>
        </authorList>
    </citation>
    <scope>NUCLEOTIDE SEQUENCE [LARGE SCALE GENOMIC DNA]</scope>
    <source>
        <strain>cv. Columbia</strain>
    </source>
</reference>
<reference key="3">
    <citation type="journal article" date="2017" name="Plant J.">
        <title>Araport11: a complete reannotation of the Arabidopsis thaliana reference genome.</title>
        <authorList>
            <person name="Cheng C.Y."/>
            <person name="Krishnakumar V."/>
            <person name="Chan A.P."/>
            <person name="Thibaud-Nissen F."/>
            <person name="Schobel S."/>
            <person name="Town C.D."/>
        </authorList>
    </citation>
    <scope>GENOME REANNOTATION</scope>
    <source>
        <strain>cv. Columbia</strain>
    </source>
</reference>
<reference key="4">
    <citation type="journal article" date="2003" name="Science">
        <title>Empirical analysis of transcriptional activity in the Arabidopsis genome.</title>
        <authorList>
            <person name="Yamada K."/>
            <person name="Lim J."/>
            <person name="Dale J.M."/>
            <person name="Chen H."/>
            <person name="Shinn P."/>
            <person name="Palm C.J."/>
            <person name="Southwick A.M."/>
            <person name="Wu H.C."/>
            <person name="Kim C.J."/>
            <person name="Nguyen M."/>
            <person name="Pham P.K."/>
            <person name="Cheuk R.F."/>
            <person name="Karlin-Newmann G."/>
            <person name="Liu S.X."/>
            <person name="Lam B."/>
            <person name="Sakano H."/>
            <person name="Wu T."/>
            <person name="Yu G."/>
            <person name="Miranda M."/>
            <person name="Quach H.L."/>
            <person name="Tripp M."/>
            <person name="Chang C.H."/>
            <person name="Lee J.M."/>
            <person name="Toriumi M.J."/>
            <person name="Chan M.M."/>
            <person name="Tang C.C."/>
            <person name="Onodera C.S."/>
            <person name="Deng J.M."/>
            <person name="Akiyama K."/>
            <person name="Ansari Y."/>
            <person name="Arakawa T."/>
            <person name="Banh J."/>
            <person name="Banno F."/>
            <person name="Bowser L."/>
            <person name="Brooks S.Y."/>
            <person name="Carninci P."/>
            <person name="Chao Q."/>
            <person name="Choy N."/>
            <person name="Enju A."/>
            <person name="Goldsmith A.D."/>
            <person name="Gurjal M."/>
            <person name="Hansen N.F."/>
            <person name="Hayashizaki Y."/>
            <person name="Johnson-Hopson C."/>
            <person name="Hsuan V.W."/>
            <person name="Iida K."/>
            <person name="Karnes M."/>
            <person name="Khan S."/>
            <person name="Koesema E."/>
            <person name="Ishida J."/>
            <person name="Jiang P.X."/>
            <person name="Jones T."/>
            <person name="Kawai J."/>
            <person name="Kamiya A."/>
            <person name="Meyers C."/>
            <person name="Nakajima M."/>
            <person name="Narusaka M."/>
            <person name="Seki M."/>
            <person name="Sakurai T."/>
            <person name="Satou M."/>
            <person name="Tamse R."/>
            <person name="Vaysberg M."/>
            <person name="Wallender E.K."/>
            <person name="Wong C."/>
            <person name="Yamamura Y."/>
            <person name="Yuan S."/>
            <person name="Shinozaki K."/>
            <person name="Davis R.W."/>
            <person name="Theologis A."/>
            <person name="Ecker J.R."/>
        </authorList>
    </citation>
    <scope>NUCLEOTIDE SEQUENCE [LARGE SCALE MRNA]</scope>
    <source>
        <strain>cv. Columbia</strain>
    </source>
</reference>
<reference key="5">
    <citation type="journal article" date="1998" name="Plant J.">
        <title>Arginine decarboxylase (polyamine synthesis) mutants of Arabidopsis thaliana exhibit altered root growth.</title>
        <authorList>
            <person name="Watson M.B."/>
            <person name="Emory K.K."/>
            <person name="Piatak R.M."/>
            <person name="Malmberg R.L."/>
        </authorList>
    </citation>
    <scope>DISRUPTION PHENOTYPE</scope>
</reference>
<reference key="6">
    <citation type="journal article" date="2001" name="Plant J.">
        <title>Arabidopsis polyamine biosynthesis: absence of ornithine decarboxylase and the mechanism of arginine decarboxylase activity.</title>
        <authorList>
            <person name="Hanfrey C."/>
            <person name="Sommer S."/>
            <person name="Mayer M.J."/>
            <person name="Burtin D."/>
            <person name="Michael A.J."/>
        </authorList>
    </citation>
    <scope>FUNCTION</scope>
    <scope>CATALYTIC ACTIVITY</scope>
    <scope>SUBUNIT</scope>
    <scope>MUTAGENESIS OF LYS-136 AND CYS-524</scope>
</reference>
<reference key="7">
    <citation type="journal article" date="2005" name="FEBS Lett.">
        <title>Arabidopsis ADC genes involved in polyamine biosynthesis are essential for seed development.</title>
        <authorList>
            <person name="Urano K."/>
            <person name="Hobo T."/>
            <person name="Shinozaki K."/>
        </authorList>
    </citation>
    <scope>FUNCTION</scope>
</reference>
<reference key="8">
    <citation type="journal article" date="2008" name="Plant Physiol.">
        <title>Putrescine is involved in Arabidopsis freezing tolerance and cold acclimation by regulating abscisic acid levels in response to low temperature.</title>
        <authorList>
            <person name="Cuevas J.C."/>
            <person name="Lopez-Cobollo R."/>
            <person name="Alcazar R."/>
            <person name="Zarza X."/>
            <person name="Koncz C."/>
            <person name="Altabella T."/>
            <person name="Salinas J."/>
            <person name="Tiburcio A.F."/>
            <person name="Ferrando A."/>
        </authorList>
    </citation>
    <scope>FUNCTION</scope>
    <scope>INDUCTION BY FREEZING</scope>
</reference>
<reference key="9">
    <citation type="journal article" date="2015" name="Plant Biol.">
        <title>Role of Arginine decarboxylase (ADC) in Arabidopsis thaliana defence against the pathogenic bacterium Pseudomonas viridiflava.</title>
        <authorList>
            <person name="Rossi F.R."/>
            <person name="Marina M."/>
            <person name="Pieckenstain F.L."/>
        </authorList>
    </citation>
    <scope>FUNCTION</scope>
    <scope>INDUCTION BY BACTERIAL PATHOGEN</scope>
</reference>
<reference key="10">
    <citation type="journal article" date="2016" name="Front. Plant Sci.">
        <title>Simultaneous silencing of two arginine decarboxylase genes alters development in Arabidopsis.</title>
        <authorList>
            <person name="Sanchez-Rangel D."/>
            <person name="Chavez-Martinez A.I."/>
            <person name="Rodriguez-Hernandez A.A."/>
            <person name="Maruri-Lopez I."/>
            <person name="Urano K."/>
            <person name="Shinozaki K."/>
            <person name="Jimenez-Bremont J.F."/>
        </authorList>
    </citation>
    <scope>FUNCTION</scope>
</reference>
<reference key="11">
    <citation type="journal article" date="2017" name="Biochem. Biophys. Res. Commun.">
        <title>Hetero- and homodimerization of Arabidopsis thaliana arginine decarboxylase AtADC1 and AtADC2.</title>
        <authorList>
            <person name="Maruri-Lopez I."/>
            <person name="Jimenez-Bremont J.F."/>
        </authorList>
    </citation>
    <scope>SUBUNIT</scope>
    <scope>SUBCELLULAR LOCATION</scope>
</reference>
<sequence length="702" mass="76175">MPALAFVDTPIDTFSSIFTPSSVSTAVVDGSCHWSPSLSSSLYRIDGWGAPYFAANSSGNISVRPHGSNTLPHQDIDLMKVVKKVTDPSGLGLQLPLIVRFPDVLKNRLECLQSAFDYAIQSQGYDSHYQGVYPVKCNQDRFIIEDIVEFGSGFRFGLEAGSKPEILLAMSCLCKGNPEAFLVCNGFKDSEYISLALFGRKLELNTVIVLEQEEELDLVIDLSQKMNVRPVIGLRAKLRTKHSGHFGSTSGEKGKFGLTTVQILRVVRKLSQVGMLDCLQLLHFHIGSQIPSTALLSDGVAEAAQLYCELVRLGAHMKVIDIGGGLGIDYDGSKSGESDLSVAYSLEEYAAAVVASVRFVCDQKSVKHPVICSESGRAIVSHHSVLIFEAVSAGQQHETPTDHQFMLEGYSEEVRGDYENLYGAAMRGDRESCLLYVDQLKQRCVEGFKEGSLGIEQLAGVDGLCEWVIKAIGASDPVLTYHVNLSVFTSIPDFWGIDQLFPIVPIHKLDQRPAARGILSDLTCDSDGKINKFIGGESSLPLHEMDNNGCSGGRYYLGMFLGGAYEEALGGVHNLFGGPSVVRVLQSDGPHGFAVTRAVMGQSSADVLRAMQHEPELMFQTLKHRAEEPRNNNNKACGDKGNDKLVVASCLAKSFNNMPYLSMETSTNALTAAVNNLGVYYCDEAAAGGGGKGKDENWSYFG</sequence>
<dbReference type="EC" id="4.1.1.19" evidence="7"/>
<dbReference type="EMBL" id="U52851">
    <property type="protein sequence ID" value="AAB09723.1"/>
    <property type="molecule type" value="mRNA"/>
</dbReference>
<dbReference type="EMBL" id="AC007195">
    <property type="protein sequence ID" value="AAD26494.1"/>
    <property type="molecule type" value="Genomic_DNA"/>
</dbReference>
<dbReference type="EMBL" id="CP002685">
    <property type="protein sequence ID" value="AEC06503.1"/>
    <property type="molecule type" value="Genomic_DNA"/>
</dbReference>
<dbReference type="EMBL" id="BT008636">
    <property type="protein sequence ID" value="AAP40453.1"/>
    <property type="molecule type" value="mRNA"/>
</dbReference>
<dbReference type="PIR" id="A84541">
    <property type="entry name" value="A84541"/>
</dbReference>
<dbReference type="PIR" id="S71239">
    <property type="entry name" value="S71239"/>
</dbReference>
<dbReference type="RefSeq" id="NP_179243.1">
    <property type="nucleotide sequence ID" value="NM_127204.3"/>
</dbReference>
<dbReference type="SMR" id="Q9SI64"/>
<dbReference type="FunCoup" id="Q9SI64">
    <property type="interactions" value="6"/>
</dbReference>
<dbReference type="STRING" id="3702.Q9SI64"/>
<dbReference type="GlyGen" id="Q9SI64">
    <property type="glycosylation" value="1 site"/>
</dbReference>
<dbReference type="PaxDb" id="3702-AT2G16500.1"/>
<dbReference type="ProteomicsDB" id="232568"/>
<dbReference type="EnsemblPlants" id="AT2G16500.1">
    <property type="protein sequence ID" value="AT2G16500.1"/>
    <property type="gene ID" value="AT2G16500"/>
</dbReference>
<dbReference type="GeneID" id="816149"/>
<dbReference type="Gramene" id="AT2G16500.1">
    <property type="protein sequence ID" value="AT2G16500.1"/>
    <property type="gene ID" value="AT2G16500"/>
</dbReference>
<dbReference type="KEGG" id="ath:AT2G16500"/>
<dbReference type="Araport" id="AT2G16500"/>
<dbReference type="TAIR" id="AT2G16500">
    <property type="gene designation" value="ADC1"/>
</dbReference>
<dbReference type="eggNOG" id="ENOG502QTXD">
    <property type="taxonomic scope" value="Eukaryota"/>
</dbReference>
<dbReference type="HOGENOM" id="CLU_027243_0_0_1"/>
<dbReference type="InParanoid" id="Q9SI64"/>
<dbReference type="OMA" id="MPYLSME"/>
<dbReference type="OrthoDB" id="3717802at2759"/>
<dbReference type="PhylomeDB" id="Q9SI64"/>
<dbReference type="BioCyc" id="ARA:AT2G16500-MONOMER"/>
<dbReference type="BRENDA" id="4.1.1.19">
    <property type="organism ID" value="399"/>
</dbReference>
<dbReference type="UniPathway" id="UPA00186">
    <property type="reaction ID" value="UER00284"/>
</dbReference>
<dbReference type="PRO" id="PR:Q9SI64"/>
<dbReference type="Proteomes" id="UP000006548">
    <property type="component" value="Chromosome 2"/>
</dbReference>
<dbReference type="ExpressionAtlas" id="Q9SI64">
    <property type="expression patterns" value="baseline and differential"/>
</dbReference>
<dbReference type="GO" id="GO:0009507">
    <property type="term" value="C:chloroplast"/>
    <property type="evidence" value="ECO:0000314"/>
    <property type="project" value="UniProtKB"/>
</dbReference>
<dbReference type="GO" id="GO:0005829">
    <property type="term" value="C:cytosol"/>
    <property type="evidence" value="ECO:0000314"/>
    <property type="project" value="UniProtKB"/>
</dbReference>
<dbReference type="GO" id="GO:0008792">
    <property type="term" value="F:arginine decarboxylase activity"/>
    <property type="evidence" value="ECO:0007669"/>
    <property type="project" value="UniProtKB-EC"/>
</dbReference>
<dbReference type="GO" id="GO:0042803">
    <property type="term" value="F:protein homodimerization activity"/>
    <property type="evidence" value="ECO:0000353"/>
    <property type="project" value="UniProtKB"/>
</dbReference>
<dbReference type="GO" id="GO:0006527">
    <property type="term" value="P:arginine catabolic process"/>
    <property type="evidence" value="ECO:0007669"/>
    <property type="project" value="InterPro"/>
</dbReference>
<dbReference type="GO" id="GO:0006596">
    <property type="term" value="P:polyamine biosynthetic process"/>
    <property type="evidence" value="ECO:0000315"/>
    <property type="project" value="TAIR"/>
</dbReference>
<dbReference type="GO" id="GO:0009446">
    <property type="term" value="P:putrescine biosynthetic process"/>
    <property type="evidence" value="ECO:0007669"/>
    <property type="project" value="UniProtKB-KW"/>
</dbReference>
<dbReference type="GO" id="GO:0009409">
    <property type="term" value="P:response to cold"/>
    <property type="evidence" value="ECO:0000315"/>
    <property type="project" value="TAIR"/>
</dbReference>
<dbReference type="GO" id="GO:0006979">
    <property type="term" value="P:response to oxidative stress"/>
    <property type="evidence" value="ECO:0000270"/>
    <property type="project" value="TAIR"/>
</dbReference>
<dbReference type="GO" id="GO:0009651">
    <property type="term" value="P:response to salt stress"/>
    <property type="evidence" value="ECO:0000315"/>
    <property type="project" value="TAIR"/>
</dbReference>
<dbReference type="GO" id="GO:0008295">
    <property type="term" value="P:spermidine biosynthetic process"/>
    <property type="evidence" value="ECO:0007669"/>
    <property type="project" value="UniProtKB-KW"/>
</dbReference>
<dbReference type="CDD" id="cd06830">
    <property type="entry name" value="PLPDE_III_ADC"/>
    <property type="match status" value="1"/>
</dbReference>
<dbReference type="FunFam" id="1.20.58.930:FF:000003">
    <property type="entry name" value="Arginine decarboxylase"/>
    <property type="match status" value="1"/>
</dbReference>
<dbReference type="FunFam" id="3.20.20.10:FF:000001">
    <property type="entry name" value="Biosynthetic arginine decarboxylase"/>
    <property type="match status" value="1"/>
</dbReference>
<dbReference type="Gene3D" id="1.20.58.930">
    <property type="match status" value="1"/>
</dbReference>
<dbReference type="Gene3D" id="3.20.20.10">
    <property type="entry name" value="Alanine racemase"/>
    <property type="match status" value="1"/>
</dbReference>
<dbReference type="Gene3D" id="2.40.37.10">
    <property type="entry name" value="Lyase, Ornithine Decarboxylase, Chain A, domain 1"/>
    <property type="match status" value="1"/>
</dbReference>
<dbReference type="InterPro" id="IPR009006">
    <property type="entry name" value="Ala_racemase/Decarboxylase_C"/>
</dbReference>
<dbReference type="InterPro" id="IPR002985">
    <property type="entry name" value="Arg_decrbxlase"/>
</dbReference>
<dbReference type="InterPro" id="IPR022657">
    <property type="entry name" value="De-COase2_CS"/>
</dbReference>
<dbReference type="InterPro" id="IPR022644">
    <property type="entry name" value="De-COase2_N"/>
</dbReference>
<dbReference type="InterPro" id="IPR022653">
    <property type="entry name" value="De-COase2_pyr-phos_BS"/>
</dbReference>
<dbReference type="InterPro" id="IPR000183">
    <property type="entry name" value="Orn/DAP/Arg_de-COase"/>
</dbReference>
<dbReference type="InterPro" id="IPR029066">
    <property type="entry name" value="PLP-binding_barrel"/>
</dbReference>
<dbReference type="NCBIfam" id="NF003763">
    <property type="entry name" value="PRK05354.1"/>
    <property type="match status" value="1"/>
</dbReference>
<dbReference type="NCBIfam" id="TIGR01273">
    <property type="entry name" value="speA"/>
    <property type="match status" value="1"/>
</dbReference>
<dbReference type="PANTHER" id="PTHR43295">
    <property type="entry name" value="ARGININE DECARBOXYLASE"/>
    <property type="match status" value="1"/>
</dbReference>
<dbReference type="PANTHER" id="PTHR43295:SF1">
    <property type="entry name" value="ARGININE DECARBOXYLASE 1, CHLOROPLASTIC-RELATED"/>
    <property type="match status" value="1"/>
</dbReference>
<dbReference type="Pfam" id="PF02784">
    <property type="entry name" value="Orn_Arg_deC_N"/>
    <property type="match status" value="1"/>
</dbReference>
<dbReference type="PIRSF" id="PIRSF001336">
    <property type="entry name" value="Arg_decrbxlase"/>
    <property type="match status" value="1"/>
</dbReference>
<dbReference type="PRINTS" id="PR01180">
    <property type="entry name" value="ARGDCRBXLASE"/>
</dbReference>
<dbReference type="PRINTS" id="PR01179">
    <property type="entry name" value="ODADCRBXLASE"/>
</dbReference>
<dbReference type="SUPFAM" id="SSF51419">
    <property type="entry name" value="PLP-binding barrel"/>
    <property type="match status" value="1"/>
</dbReference>
<dbReference type="PROSITE" id="PS00878">
    <property type="entry name" value="ODR_DC_2_1"/>
    <property type="match status" value="1"/>
</dbReference>
<dbReference type="PROSITE" id="PS00879">
    <property type="entry name" value="ODR_DC_2_2"/>
    <property type="match status" value="1"/>
</dbReference>
<proteinExistence type="evidence at protein level"/>
<evidence type="ECO:0000250" key="1"/>
<evidence type="ECO:0000250" key="2">
    <source>
        <dbReference type="UniProtKB" id="P00860"/>
    </source>
</evidence>
<evidence type="ECO:0000250" key="3">
    <source>
        <dbReference type="UniProtKB" id="P07805"/>
    </source>
</evidence>
<evidence type="ECO:0000250" key="4">
    <source>
        <dbReference type="UniProtKB" id="P11926"/>
    </source>
</evidence>
<evidence type="ECO:0000250" key="5">
    <source>
        <dbReference type="UniProtKB" id="P21170"/>
    </source>
</evidence>
<evidence type="ECO:0000255" key="6"/>
<evidence type="ECO:0000269" key="7">
    <source>
    </source>
</evidence>
<evidence type="ECO:0000269" key="8">
    <source>
    </source>
</evidence>
<evidence type="ECO:0000269" key="9">
    <source>
    </source>
</evidence>
<evidence type="ECO:0000269" key="10">
    <source>
    </source>
</evidence>
<evidence type="ECO:0000269" key="11">
    <source>
    </source>
</evidence>
<evidence type="ECO:0000269" key="12">
    <source>
    </source>
</evidence>
<evidence type="ECO:0000269" key="13">
    <source>
    </source>
</evidence>
<evidence type="ECO:0000303" key="14">
    <source>
    </source>
</evidence>
<evidence type="ECO:0000303" key="15">
    <source>
    </source>
</evidence>
<evidence type="ECO:0000303" key="16">
    <source>
    </source>
</evidence>
<evidence type="ECO:0000305" key="17"/>
<evidence type="ECO:0000312" key="18">
    <source>
        <dbReference type="Araport" id="AT2G16500"/>
    </source>
</evidence>
<evidence type="ECO:0000312" key="19">
    <source>
        <dbReference type="EMBL" id="AAD26494.1"/>
    </source>
</evidence>